<keyword id="KW-0002">3D-structure</keyword>
<keyword id="KW-0007">Acetylation</keyword>
<keyword id="KW-0025">Alternative splicing</keyword>
<keyword id="KW-0460">Magnesium</keyword>
<keyword id="KW-0479">Metal-binding</keyword>
<keyword id="KW-0539">Nucleus</keyword>
<keyword id="KW-1267">Proteomics identification</keyword>
<keyword id="KW-1185">Reference proteome</keyword>
<organism>
    <name type="scientific">Homo sapiens</name>
    <name type="common">Human</name>
    <dbReference type="NCBI Taxonomy" id="9606"/>
    <lineage>
        <taxon>Eukaryota</taxon>
        <taxon>Metazoa</taxon>
        <taxon>Chordata</taxon>
        <taxon>Craniata</taxon>
        <taxon>Vertebrata</taxon>
        <taxon>Euteleostomi</taxon>
        <taxon>Mammalia</taxon>
        <taxon>Eutheria</taxon>
        <taxon>Euarchontoglires</taxon>
        <taxon>Primates</taxon>
        <taxon>Haplorrhini</taxon>
        <taxon>Catarrhini</taxon>
        <taxon>Hominidae</taxon>
        <taxon>Homo</taxon>
    </lineage>
</organism>
<dbReference type="EMBL" id="AL136662">
    <property type="protein sequence ID" value="CAB66597.1"/>
    <property type="molecule type" value="mRNA"/>
</dbReference>
<dbReference type="EMBL" id="AK301033">
    <property type="protein sequence ID" value="BAG62647.1"/>
    <property type="molecule type" value="mRNA"/>
</dbReference>
<dbReference type="EMBL" id="AK027475">
    <property type="protein sequence ID" value="BAB55140.1"/>
    <property type="molecule type" value="mRNA"/>
</dbReference>
<dbReference type="EMBL" id="AK293207">
    <property type="protein sequence ID" value="BAG56747.1"/>
    <property type="molecule type" value="mRNA"/>
</dbReference>
<dbReference type="EMBL" id="AC027220">
    <property type="status" value="NOT_ANNOTATED_CDS"/>
    <property type="molecule type" value="Genomic_DNA"/>
</dbReference>
<dbReference type="EMBL" id="BC037823">
    <property type="protein sequence ID" value="AAH37823.1"/>
    <property type="molecule type" value="mRNA"/>
</dbReference>
<dbReference type="EMBL" id="BC007991">
    <property type="protein sequence ID" value="AAH07991.1"/>
    <property type="molecule type" value="mRNA"/>
</dbReference>
<dbReference type="CCDS" id="CCDS10211.1">
    <molecule id="Q96SY0-1"/>
</dbReference>
<dbReference type="CCDS" id="CCDS45283.1">
    <molecule id="Q96SY0-4"/>
</dbReference>
<dbReference type="RefSeq" id="NP_001129515.1">
    <molecule id="Q96SY0-4"/>
    <property type="nucleotide sequence ID" value="NM_001136043.4"/>
</dbReference>
<dbReference type="RefSeq" id="NP_001193987.1">
    <property type="nucleotide sequence ID" value="NM_001207058.1"/>
</dbReference>
<dbReference type="RefSeq" id="NP_001193988.2">
    <molecule id="Q96SY0-4"/>
    <property type="nucleotide sequence ID" value="NM_001207059.4"/>
</dbReference>
<dbReference type="RefSeq" id="NP_001353289.1">
    <molecule id="Q96SY0-1"/>
    <property type="nucleotide sequence ID" value="NM_001366360.3"/>
</dbReference>
<dbReference type="RefSeq" id="NP_001353293.1">
    <molecule id="Q96SY0-4"/>
    <property type="nucleotide sequence ID" value="NM_001366364.3"/>
</dbReference>
<dbReference type="RefSeq" id="NP_001353294.1">
    <molecule id="Q96SY0-4"/>
    <property type="nucleotide sequence ID" value="NM_001366365.3"/>
</dbReference>
<dbReference type="RefSeq" id="NP_001381723.1">
    <molecule id="Q96SY0-1"/>
    <property type="nucleotide sequence ID" value="NM_001394794.1"/>
</dbReference>
<dbReference type="RefSeq" id="NP_001381725.1">
    <molecule id="Q96SY0-1"/>
    <property type="nucleotide sequence ID" value="NM_001394796.1"/>
</dbReference>
<dbReference type="RefSeq" id="XP_006720772.1">
    <property type="nucleotide sequence ID" value="XM_006720709.3"/>
</dbReference>
<dbReference type="RefSeq" id="XP_006720774.1">
    <property type="nucleotide sequence ID" value="XM_006720711.2"/>
</dbReference>
<dbReference type="RefSeq" id="XP_011520403.1">
    <property type="nucleotide sequence ID" value="XM_011522101.2"/>
</dbReference>
<dbReference type="RefSeq" id="XP_016878133.1">
    <property type="nucleotide sequence ID" value="XM_017022644.1"/>
</dbReference>
<dbReference type="PDB" id="6SN1">
    <property type="method" value="X-ray"/>
    <property type="resolution" value="2.54 A"/>
    <property type="chains" value="B=1-518"/>
</dbReference>
<dbReference type="PDB" id="8PK5">
    <property type="method" value="X-ray"/>
    <property type="resolution" value="2.50 A"/>
    <property type="chains" value="B=1-518"/>
</dbReference>
<dbReference type="PDB" id="8RBX">
    <property type="method" value="EM"/>
    <property type="resolution" value="4.10 A"/>
    <property type="chains" value="n=1-518"/>
</dbReference>
<dbReference type="PDB" id="8RBZ">
    <property type="method" value="EM"/>
    <property type="resolution" value="3.70 A"/>
    <property type="chains" value="n=1-518"/>
</dbReference>
<dbReference type="PDB" id="8RC4">
    <property type="method" value="EM"/>
    <property type="resolution" value="3.10 A"/>
    <property type="chains" value="n=1-518"/>
</dbReference>
<dbReference type="PDB" id="9EOC">
    <property type="method" value="EM"/>
    <property type="resolution" value="3.30 A"/>
    <property type="chains" value="B=1-518"/>
</dbReference>
<dbReference type="PDB" id="9EP1">
    <property type="method" value="EM"/>
    <property type="resolution" value="4.00 A"/>
    <property type="chains" value="B=1-518"/>
</dbReference>
<dbReference type="PDB" id="9FA4">
    <property type="method" value="EM"/>
    <property type="resolution" value="4.00 A"/>
    <property type="chains" value="B=1-518"/>
</dbReference>
<dbReference type="PDB" id="9FA7">
    <property type="method" value="EM"/>
    <property type="resolution" value="4.00 A"/>
    <property type="chains" value="B=1-518"/>
</dbReference>
<dbReference type="PDBsum" id="6SN1"/>
<dbReference type="PDBsum" id="8PK5"/>
<dbReference type="PDBsum" id="8RBX"/>
<dbReference type="PDBsum" id="8RBZ"/>
<dbReference type="PDBsum" id="8RC4"/>
<dbReference type="PDBsum" id="9EOC"/>
<dbReference type="PDBsum" id="9EP1"/>
<dbReference type="PDBsum" id="9FA4"/>
<dbReference type="PDBsum" id="9FA7"/>
<dbReference type="EMDB" id="EMD-19038"/>
<dbReference type="EMDB" id="EMD-19040"/>
<dbReference type="EMDB" id="EMD-19047"/>
<dbReference type="EMDB" id="EMD-19851"/>
<dbReference type="EMDB" id="EMD-19871"/>
<dbReference type="EMDB" id="EMD-50267"/>
<dbReference type="EMDB" id="EMD-50268"/>
<dbReference type="SMR" id="Q96SY0"/>
<dbReference type="BioGRID" id="123520">
    <property type="interactions" value="106"/>
</dbReference>
<dbReference type="ComplexPortal" id="CPX-6441">
    <property type="entry name" value="Integrator complex"/>
</dbReference>
<dbReference type="FunCoup" id="Q96SY0">
    <property type="interactions" value="4705"/>
</dbReference>
<dbReference type="IntAct" id="Q96SY0">
    <property type="interactions" value="69"/>
</dbReference>
<dbReference type="MINT" id="Q96SY0"/>
<dbReference type="STRING" id="9606.ENSP00000498715"/>
<dbReference type="GlyGen" id="Q96SY0">
    <property type="glycosylation" value="1 site, 1 O-linked glycan (1 site)"/>
</dbReference>
<dbReference type="iPTMnet" id="Q96SY0"/>
<dbReference type="PhosphoSitePlus" id="Q96SY0"/>
<dbReference type="BioMuta" id="INTS14"/>
<dbReference type="DMDM" id="156631025"/>
<dbReference type="jPOST" id="Q96SY0"/>
<dbReference type="MassIVE" id="Q96SY0"/>
<dbReference type="PaxDb" id="9606-ENSP00000408429"/>
<dbReference type="PeptideAtlas" id="Q96SY0"/>
<dbReference type="ProteomicsDB" id="5260"/>
<dbReference type="ProteomicsDB" id="78159">
    <molecule id="Q96SY0-1"/>
</dbReference>
<dbReference type="ProteomicsDB" id="78160">
    <molecule id="Q96SY0-2"/>
</dbReference>
<dbReference type="ProteomicsDB" id="78161">
    <molecule id="Q96SY0-3"/>
</dbReference>
<dbReference type="Pumba" id="Q96SY0"/>
<dbReference type="Antibodypedia" id="52220">
    <property type="antibodies" value="89 antibodies from 16 providers"/>
</dbReference>
<dbReference type="DNASU" id="81556"/>
<dbReference type="Ensembl" id="ENST00000313182.7">
    <molecule id="Q96SY0-1"/>
    <property type="protein sequence ID" value="ENSP00000326379.2"/>
    <property type="gene ID" value="ENSG00000138614.16"/>
</dbReference>
<dbReference type="Ensembl" id="ENST00000420799.7">
    <molecule id="Q96SY0-4"/>
    <property type="protein sequence ID" value="ENSP00000408429.3"/>
    <property type="gene ID" value="ENSG00000138614.16"/>
</dbReference>
<dbReference type="Ensembl" id="ENST00000431261.6">
    <molecule id="Q96SY0-4"/>
    <property type="protein sequence ID" value="ENSP00000402898.2"/>
    <property type="gene ID" value="ENSG00000138614.16"/>
</dbReference>
<dbReference type="Ensembl" id="ENST00000652388.1">
    <molecule id="Q96SY0-3"/>
    <property type="protein sequence ID" value="ENSP00000498715.1"/>
    <property type="gene ID" value="ENSG00000138614.16"/>
</dbReference>
<dbReference type="GeneID" id="81556"/>
<dbReference type="KEGG" id="hsa:81556"/>
<dbReference type="MANE-Select" id="ENST00000313182.7">
    <property type="protein sequence ID" value="ENSP00000326379.2"/>
    <property type="RefSeq nucleotide sequence ID" value="NM_001394796.1"/>
    <property type="RefSeq protein sequence ID" value="NP_001381725.1"/>
</dbReference>
<dbReference type="UCSC" id="uc002ape.5">
    <molecule id="Q96SY0-1"/>
    <property type="organism name" value="human"/>
</dbReference>
<dbReference type="AGR" id="HGNC:25372"/>
<dbReference type="CTD" id="81556"/>
<dbReference type="DisGeNET" id="81556"/>
<dbReference type="GeneCards" id="INTS14"/>
<dbReference type="HGNC" id="HGNC:25372">
    <property type="gene designation" value="INTS14"/>
</dbReference>
<dbReference type="HPA" id="ENSG00000138614">
    <property type="expression patterns" value="Low tissue specificity"/>
</dbReference>
<dbReference type="MIM" id="620878">
    <property type="type" value="gene"/>
</dbReference>
<dbReference type="neXtProt" id="NX_Q96SY0"/>
<dbReference type="OpenTargets" id="ENSG00000138614"/>
<dbReference type="PharmGKB" id="PA142672279"/>
<dbReference type="VEuPathDB" id="HostDB:ENSG00000138614"/>
<dbReference type="eggNOG" id="ENOG502QQ37">
    <property type="taxonomic scope" value="Eukaryota"/>
</dbReference>
<dbReference type="GeneTree" id="ENSGT00390000009486"/>
<dbReference type="InParanoid" id="Q96SY0"/>
<dbReference type="OrthoDB" id="2374335at2759"/>
<dbReference type="PAN-GO" id="Q96SY0">
    <property type="GO annotations" value="1 GO annotation based on evolutionary models"/>
</dbReference>
<dbReference type="PhylomeDB" id="Q96SY0"/>
<dbReference type="TreeFam" id="TF323245"/>
<dbReference type="PathwayCommons" id="Q96SY0"/>
<dbReference type="Reactome" id="R-HSA-6807505">
    <property type="pathway name" value="RNA polymerase II transcribes snRNA genes"/>
</dbReference>
<dbReference type="SignaLink" id="Q96SY0"/>
<dbReference type="SIGNOR" id="Q96SY0"/>
<dbReference type="BioGRID-ORCS" id="81556">
    <property type="hits" value="382 hits in 1159 CRISPR screens"/>
</dbReference>
<dbReference type="ChiTaRS" id="VWA9">
    <property type="organism name" value="human"/>
</dbReference>
<dbReference type="GenomeRNAi" id="81556"/>
<dbReference type="Pharos" id="Q96SY0">
    <property type="development level" value="Tdark"/>
</dbReference>
<dbReference type="PRO" id="PR:Q96SY0"/>
<dbReference type="Proteomes" id="UP000005640">
    <property type="component" value="Chromosome 15"/>
</dbReference>
<dbReference type="RNAct" id="Q96SY0">
    <property type="molecule type" value="protein"/>
</dbReference>
<dbReference type="Bgee" id="ENSG00000138614">
    <property type="expression patterns" value="Expressed in rectum and 147 other cell types or tissues"/>
</dbReference>
<dbReference type="ExpressionAtlas" id="Q96SY0">
    <property type="expression patterns" value="baseline and differential"/>
</dbReference>
<dbReference type="GO" id="GO:0160232">
    <property type="term" value="C:INTAC complex"/>
    <property type="evidence" value="ECO:0000314"/>
    <property type="project" value="UniProtKB"/>
</dbReference>
<dbReference type="GO" id="GO:0032039">
    <property type="term" value="C:integrator complex"/>
    <property type="evidence" value="ECO:0000314"/>
    <property type="project" value="UniProtKB"/>
</dbReference>
<dbReference type="GO" id="GO:0005654">
    <property type="term" value="C:nucleoplasm"/>
    <property type="evidence" value="ECO:0000304"/>
    <property type="project" value="Reactome"/>
</dbReference>
<dbReference type="GO" id="GO:0005634">
    <property type="term" value="C:nucleus"/>
    <property type="evidence" value="ECO:0000314"/>
    <property type="project" value="FlyBase"/>
</dbReference>
<dbReference type="GO" id="GO:0034243">
    <property type="term" value="P:regulation of transcription elongation by RNA polymerase II"/>
    <property type="evidence" value="ECO:0000303"/>
    <property type="project" value="ComplexPortal"/>
</dbReference>
<dbReference type="GO" id="GO:0160240">
    <property type="term" value="P:RNA polymerase II transcription initiation surveillance"/>
    <property type="evidence" value="ECO:0000314"/>
    <property type="project" value="UniProtKB"/>
</dbReference>
<dbReference type="GO" id="GO:0034472">
    <property type="term" value="P:snRNA 3'-end processing"/>
    <property type="evidence" value="ECO:0000318"/>
    <property type="project" value="GO_Central"/>
</dbReference>
<dbReference type="GO" id="GO:0016180">
    <property type="term" value="P:snRNA processing"/>
    <property type="evidence" value="ECO:0000315"/>
    <property type="project" value="UniProtKB"/>
</dbReference>
<dbReference type="FunFam" id="3.40.50.410:FF:000137">
    <property type="entry name" value="Integrator complex subunit 14"/>
    <property type="match status" value="1"/>
</dbReference>
<dbReference type="Gene3D" id="3.40.50.410">
    <property type="entry name" value="von Willebrand factor, type A domain"/>
    <property type="match status" value="1"/>
</dbReference>
<dbReference type="InterPro" id="IPR039841">
    <property type="entry name" value="INTS14"/>
</dbReference>
<dbReference type="InterPro" id="IPR045814">
    <property type="entry name" value="IntS14_b-barrel"/>
</dbReference>
<dbReference type="InterPro" id="IPR046471">
    <property type="entry name" value="IntS14_C"/>
</dbReference>
<dbReference type="InterPro" id="IPR002035">
    <property type="entry name" value="VWF_A"/>
</dbReference>
<dbReference type="InterPro" id="IPR036465">
    <property type="entry name" value="vWFA_dom_sf"/>
</dbReference>
<dbReference type="PANTHER" id="PTHR13532">
    <property type="match status" value="1"/>
</dbReference>
<dbReference type="PANTHER" id="PTHR13532:SF3">
    <property type="entry name" value="INTEGRATOR COMPLEX SUBUNIT 14"/>
    <property type="match status" value="1"/>
</dbReference>
<dbReference type="Pfam" id="PF19435">
    <property type="entry name" value="IntS14_b-barrel"/>
    <property type="match status" value="1"/>
</dbReference>
<dbReference type="Pfam" id="PF20504">
    <property type="entry name" value="IntS14_C"/>
    <property type="match status" value="1"/>
</dbReference>
<dbReference type="Pfam" id="PF13519">
    <property type="entry name" value="VWA_2"/>
    <property type="match status" value="1"/>
</dbReference>
<dbReference type="SUPFAM" id="SSF53300">
    <property type="entry name" value="vWA-like"/>
    <property type="match status" value="1"/>
</dbReference>
<gene>
    <name evidence="10 12" type="primary">INTS14</name>
    <name evidence="12" type="synonym">C15orf44</name>
    <name evidence="12" type="synonym">VWA9</name>
</gene>
<sequence>MPTVVVMDVSLSMTRPVSIEGSEEYQRKHLAAHGLTMLFEHMATNYKLEFTALVVFSSLWELMVPFTRDYNTLQEALSNMDDYDKTCLESALVGVCNIVQQEWGGAIPCQVVLVTDGCLGIGRGSLRHSLATQNQRSESNRFPLPFPFPSKLYIMCMANLEELQSTDSLECLERLIDLNNGEGQIFTIDGPLCLKNVQSMFGKLIDLAYTPFHAVLKCGHLTADVQVFPRPEPFVVDEEIDPIPKVINTDLEIVGFIDIADISSPPVLSRHLVLPIALNKEGDEVGTGITDDNEDENSANQIAGKIPNFCVLLHGSLKVEGMVAIVQLGPEWHGMLYSQADSKKKSNLMMSLFEPGPEPLPWLGKMAQLGPISDAKENPYGEDDNKSPFPLQPKNKRSYAQNVTVWIKPSGLQTDVQKILRNARKLPEKTQTFYKELNRLRKAALAFGFLDLLKGVADMLERECTLLPETAHPDAAFQLTHAAQQLKLASTGTSEYAAYDQNITPLHTDFSGSSTERI</sequence>
<evidence type="ECO:0000269" key="1">
    <source>
    </source>
</evidence>
<evidence type="ECO:0000269" key="2">
    <source>
    </source>
</evidence>
<evidence type="ECO:0000269" key="3">
    <source>
    </source>
</evidence>
<evidence type="ECO:0000269" key="4">
    <source>
    </source>
</evidence>
<evidence type="ECO:0000269" key="5">
    <source>
    </source>
</evidence>
<evidence type="ECO:0000269" key="6">
    <source>
    </source>
</evidence>
<evidence type="ECO:0000269" key="7">
    <source>
    </source>
</evidence>
<evidence type="ECO:0000303" key="8">
    <source>
    </source>
</evidence>
<evidence type="ECO:0000303" key="9">
    <source>
    </source>
</evidence>
<evidence type="ECO:0000303" key="10">
    <source>
    </source>
</evidence>
<evidence type="ECO:0000305" key="11"/>
<evidence type="ECO:0000312" key="12">
    <source>
        <dbReference type="HGNC" id="HGNC:25372"/>
    </source>
</evidence>
<evidence type="ECO:0007744" key="13">
    <source>
        <dbReference type="PDB" id="6SN1"/>
    </source>
</evidence>
<evidence type="ECO:0007744" key="14">
    <source>
        <dbReference type="PDB" id="8PK5"/>
    </source>
</evidence>
<evidence type="ECO:0007744" key="15">
    <source>
        <dbReference type="PDB" id="8RBX"/>
    </source>
</evidence>
<evidence type="ECO:0007744" key="16">
    <source>
        <dbReference type="PDB" id="8RBZ"/>
    </source>
</evidence>
<evidence type="ECO:0007744" key="17">
    <source>
        <dbReference type="PDB" id="8RC4"/>
    </source>
</evidence>
<evidence type="ECO:0007744" key="18">
    <source>
        <dbReference type="PDB" id="9EOC"/>
    </source>
</evidence>
<evidence type="ECO:0007744" key="19">
    <source>
        <dbReference type="PDB" id="9EP1"/>
    </source>
</evidence>
<evidence type="ECO:0007744" key="20">
    <source>
        <dbReference type="PDB" id="9FA4"/>
    </source>
</evidence>
<evidence type="ECO:0007744" key="21">
    <source>
        <dbReference type="PDB" id="9FA7"/>
    </source>
</evidence>
<evidence type="ECO:0007744" key="22">
    <source>
    </source>
</evidence>
<evidence type="ECO:0007829" key="23">
    <source>
        <dbReference type="PDB" id="6SN1"/>
    </source>
</evidence>
<evidence type="ECO:0007829" key="24">
    <source>
        <dbReference type="PDB" id="8PK5"/>
    </source>
</evidence>
<evidence type="ECO:0007829" key="25">
    <source>
        <dbReference type="PDB" id="8RC4"/>
    </source>
</evidence>
<proteinExistence type="evidence at protein level"/>
<reference key="1">
    <citation type="journal article" date="2001" name="Genome Res.">
        <title>Towards a catalog of human genes and proteins: sequencing and analysis of 500 novel complete protein coding human cDNAs.</title>
        <authorList>
            <person name="Wiemann S."/>
            <person name="Weil B."/>
            <person name="Wellenreuther R."/>
            <person name="Gassenhuber J."/>
            <person name="Glassl S."/>
            <person name="Ansorge W."/>
            <person name="Boecher M."/>
            <person name="Bloecker H."/>
            <person name="Bauersachs S."/>
            <person name="Blum H."/>
            <person name="Lauber J."/>
            <person name="Duesterhoeft A."/>
            <person name="Beyer A."/>
            <person name="Koehrer K."/>
            <person name="Strack N."/>
            <person name="Mewes H.-W."/>
            <person name="Ottenwaelder B."/>
            <person name="Obermaier B."/>
            <person name="Tampe J."/>
            <person name="Heubner D."/>
            <person name="Wambutt R."/>
            <person name="Korn B."/>
            <person name="Klein M."/>
            <person name="Poustka A."/>
        </authorList>
    </citation>
    <scope>NUCLEOTIDE SEQUENCE [LARGE SCALE MRNA] (ISOFORM 1)</scope>
    <source>
        <tissue>Brain</tissue>
    </source>
</reference>
<reference key="2">
    <citation type="journal article" date="2004" name="Nat. Genet.">
        <title>Complete sequencing and characterization of 21,243 full-length human cDNAs.</title>
        <authorList>
            <person name="Ota T."/>
            <person name="Suzuki Y."/>
            <person name="Nishikawa T."/>
            <person name="Otsuki T."/>
            <person name="Sugiyama T."/>
            <person name="Irie R."/>
            <person name="Wakamatsu A."/>
            <person name="Hayashi K."/>
            <person name="Sato H."/>
            <person name="Nagai K."/>
            <person name="Kimura K."/>
            <person name="Makita H."/>
            <person name="Sekine M."/>
            <person name="Obayashi M."/>
            <person name="Nishi T."/>
            <person name="Shibahara T."/>
            <person name="Tanaka T."/>
            <person name="Ishii S."/>
            <person name="Yamamoto J."/>
            <person name="Saito K."/>
            <person name="Kawai Y."/>
            <person name="Isono Y."/>
            <person name="Nakamura Y."/>
            <person name="Nagahari K."/>
            <person name="Murakami K."/>
            <person name="Yasuda T."/>
            <person name="Iwayanagi T."/>
            <person name="Wagatsuma M."/>
            <person name="Shiratori A."/>
            <person name="Sudo H."/>
            <person name="Hosoiri T."/>
            <person name="Kaku Y."/>
            <person name="Kodaira H."/>
            <person name="Kondo H."/>
            <person name="Sugawara M."/>
            <person name="Takahashi M."/>
            <person name="Kanda K."/>
            <person name="Yokoi T."/>
            <person name="Furuya T."/>
            <person name="Kikkawa E."/>
            <person name="Omura Y."/>
            <person name="Abe K."/>
            <person name="Kamihara K."/>
            <person name="Katsuta N."/>
            <person name="Sato K."/>
            <person name="Tanikawa M."/>
            <person name="Yamazaki M."/>
            <person name="Ninomiya K."/>
            <person name="Ishibashi T."/>
            <person name="Yamashita H."/>
            <person name="Murakawa K."/>
            <person name="Fujimori K."/>
            <person name="Tanai H."/>
            <person name="Kimata M."/>
            <person name="Watanabe M."/>
            <person name="Hiraoka S."/>
            <person name="Chiba Y."/>
            <person name="Ishida S."/>
            <person name="Ono Y."/>
            <person name="Takiguchi S."/>
            <person name="Watanabe S."/>
            <person name="Yosida M."/>
            <person name="Hotuta T."/>
            <person name="Kusano J."/>
            <person name="Kanehori K."/>
            <person name="Takahashi-Fujii A."/>
            <person name="Hara H."/>
            <person name="Tanase T.-O."/>
            <person name="Nomura Y."/>
            <person name="Togiya S."/>
            <person name="Komai F."/>
            <person name="Hara R."/>
            <person name="Takeuchi K."/>
            <person name="Arita M."/>
            <person name="Imose N."/>
            <person name="Musashino K."/>
            <person name="Yuuki H."/>
            <person name="Oshima A."/>
            <person name="Sasaki N."/>
            <person name="Aotsuka S."/>
            <person name="Yoshikawa Y."/>
            <person name="Matsunawa H."/>
            <person name="Ichihara T."/>
            <person name="Shiohata N."/>
            <person name="Sano S."/>
            <person name="Moriya S."/>
            <person name="Momiyama H."/>
            <person name="Satoh N."/>
            <person name="Takami S."/>
            <person name="Terashima Y."/>
            <person name="Suzuki O."/>
            <person name="Nakagawa S."/>
            <person name="Senoh A."/>
            <person name="Mizoguchi H."/>
            <person name="Goto Y."/>
            <person name="Shimizu F."/>
            <person name="Wakebe H."/>
            <person name="Hishigaki H."/>
            <person name="Watanabe T."/>
            <person name="Sugiyama A."/>
            <person name="Takemoto M."/>
            <person name="Kawakami B."/>
            <person name="Yamazaki M."/>
            <person name="Watanabe K."/>
            <person name="Kumagai A."/>
            <person name="Itakura S."/>
            <person name="Fukuzumi Y."/>
            <person name="Fujimori Y."/>
            <person name="Komiyama M."/>
            <person name="Tashiro H."/>
            <person name="Tanigami A."/>
            <person name="Fujiwara T."/>
            <person name="Ono T."/>
            <person name="Yamada K."/>
            <person name="Fujii Y."/>
            <person name="Ozaki K."/>
            <person name="Hirao M."/>
            <person name="Ohmori Y."/>
            <person name="Kawabata A."/>
            <person name="Hikiji T."/>
            <person name="Kobatake N."/>
            <person name="Inagaki H."/>
            <person name="Ikema Y."/>
            <person name="Okamoto S."/>
            <person name="Okitani R."/>
            <person name="Kawakami T."/>
            <person name="Noguchi S."/>
            <person name="Itoh T."/>
            <person name="Shigeta K."/>
            <person name="Senba T."/>
            <person name="Matsumura K."/>
            <person name="Nakajima Y."/>
            <person name="Mizuno T."/>
            <person name="Morinaga M."/>
            <person name="Sasaki M."/>
            <person name="Togashi T."/>
            <person name="Oyama M."/>
            <person name="Hata H."/>
            <person name="Watanabe M."/>
            <person name="Komatsu T."/>
            <person name="Mizushima-Sugano J."/>
            <person name="Satoh T."/>
            <person name="Shirai Y."/>
            <person name="Takahashi Y."/>
            <person name="Nakagawa K."/>
            <person name="Okumura K."/>
            <person name="Nagase T."/>
            <person name="Nomura N."/>
            <person name="Kikuchi H."/>
            <person name="Masuho Y."/>
            <person name="Yamashita R."/>
            <person name="Nakai K."/>
            <person name="Yada T."/>
            <person name="Nakamura Y."/>
            <person name="Ohara O."/>
            <person name="Isogai T."/>
            <person name="Sugano S."/>
        </authorList>
    </citation>
    <scope>NUCLEOTIDE SEQUENCE [LARGE SCALE MRNA] (ISOFORMS 1; 3 AND 4)</scope>
    <source>
        <tissue>Adrenal gland</tissue>
    </source>
</reference>
<reference key="3">
    <citation type="journal article" date="2006" name="Nature">
        <title>Analysis of the DNA sequence and duplication history of human chromosome 15.</title>
        <authorList>
            <person name="Zody M.C."/>
            <person name="Garber M."/>
            <person name="Sharpe T."/>
            <person name="Young S.K."/>
            <person name="Rowen L."/>
            <person name="O'Neill K."/>
            <person name="Whittaker C.A."/>
            <person name="Kamal M."/>
            <person name="Chang J.L."/>
            <person name="Cuomo C.A."/>
            <person name="Dewar K."/>
            <person name="FitzGerald M.G."/>
            <person name="Kodira C.D."/>
            <person name="Madan A."/>
            <person name="Qin S."/>
            <person name="Yang X."/>
            <person name="Abbasi N."/>
            <person name="Abouelleil A."/>
            <person name="Arachchi H.M."/>
            <person name="Baradarani L."/>
            <person name="Birditt B."/>
            <person name="Bloom S."/>
            <person name="Bloom T."/>
            <person name="Borowsky M.L."/>
            <person name="Burke J."/>
            <person name="Butler J."/>
            <person name="Cook A."/>
            <person name="DeArellano K."/>
            <person name="DeCaprio D."/>
            <person name="Dorris L. III"/>
            <person name="Dors M."/>
            <person name="Eichler E.E."/>
            <person name="Engels R."/>
            <person name="Fahey J."/>
            <person name="Fleetwood P."/>
            <person name="Friedman C."/>
            <person name="Gearin G."/>
            <person name="Hall J.L."/>
            <person name="Hensley G."/>
            <person name="Johnson E."/>
            <person name="Jones C."/>
            <person name="Kamat A."/>
            <person name="Kaur A."/>
            <person name="Locke D.P."/>
            <person name="Madan A."/>
            <person name="Munson G."/>
            <person name="Jaffe D.B."/>
            <person name="Lui A."/>
            <person name="Macdonald P."/>
            <person name="Mauceli E."/>
            <person name="Naylor J.W."/>
            <person name="Nesbitt R."/>
            <person name="Nicol R."/>
            <person name="O'Leary S.B."/>
            <person name="Ratcliffe A."/>
            <person name="Rounsley S."/>
            <person name="She X."/>
            <person name="Sneddon K.M.B."/>
            <person name="Stewart S."/>
            <person name="Sougnez C."/>
            <person name="Stone S.M."/>
            <person name="Topham K."/>
            <person name="Vincent D."/>
            <person name="Wang S."/>
            <person name="Zimmer A.R."/>
            <person name="Birren B.W."/>
            <person name="Hood L."/>
            <person name="Lander E.S."/>
            <person name="Nusbaum C."/>
        </authorList>
    </citation>
    <scope>NUCLEOTIDE SEQUENCE [LARGE SCALE GENOMIC DNA]</scope>
</reference>
<reference key="4">
    <citation type="journal article" date="2004" name="Genome Res.">
        <title>The status, quality, and expansion of the NIH full-length cDNA project: the Mammalian Gene Collection (MGC).</title>
        <authorList>
            <consortium name="The MGC Project Team"/>
        </authorList>
    </citation>
    <scope>NUCLEOTIDE SEQUENCE [LARGE SCALE MRNA] (ISOFORMS 1 AND 2)</scope>
    <source>
        <tissue>Brain</tissue>
        <tissue>Placenta</tissue>
    </source>
</reference>
<reference key="5">
    <citation type="journal article" date="2009" name="J. Cell. Biochem.">
        <title>Expression profiles of SV40-immortalization-associated genes upregulated in various human cancers.</title>
        <authorList>
            <person name="Jung H.M."/>
            <person name="Choi S.J."/>
            <person name="Kim J.K."/>
        </authorList>
    </citation>
    <scope>TISSUE SPECIFICITY</scope>
</reference>
<reference key="6">
    <citation type="journal article" date="2009" name="Science">
        <title>Lysine acetylation targets protein complexes and co-regulates major cellular functions.</title>
        <authorList>
            <person name="Choudhary C."/>
            <person name="Kumar C."/>
            <person name="Gnad F."/>
            <person name="Nielsen M.L."/>
            <person name="Rehman M."/>
            <person name="Walther T.C."/>
            <person name="Olsen J.V."/>
            <person name="Mann M."/>
        </authorList>
    </citation>
    <scope>ACETYLATION [LARGE SCALE ANALYSIS] AT LYS-418</scope>
    <scope>IDENTIFICATION BY MASS SPECTROMETRY [LARGE SCALE ANALYSIS]</scope>
</reference>
<reference key="7">
    <citation type="journal article" date="2011" name="BMC Syst. Biol.">
        <title>Initial characterization of the human central proteome.</title>
        <authorList>
            <person name="Burkard T.R."/>
            <person name="Planyavsky M."/>
            <person name="Kaupe I."/>
            <person name="Breitwieser F.P."/>
            <person name="Buerckstuemmer T."/>
            <person name="Bennett K.L."/>
            <person name="Superti-Furga G."/>
            <person name="Colinge J."/>
        </authorList>
    </citation>
    <scope>IDENTIFICATION BY MASS SPECTROMETRY [LARGE SCALE ANALYSIS]</scope>
</reference>
<reference key="8">
    <citation type="journal article" date="2023" name="Cell Rep.">
        <title>A combinatorial approach to uncover an additional Integrator subunit.</title>
        <authorList>
            <person name="Offley S.R."/>
            <person name="Pfleiderer M.M."/>
            <person name="Zucco A."/>
            <person name="Fraudeau A."/>
            <person name="Welsh S.A."/>
            <person name="Razew M."/>
            <person name="Galej W.P."/>
            <person name="Gardini A."/>
        </authorList>
    </citation>
    <scope>IDENTIFICATION IN THE INTEGRATOR COMPLEX</scope>
    <scope>MUTAGENESIS OF 8-ASP--SER-12 AND 11-LEU--ARG-15</scope>
</reference>
<reference key="9">
    <citation type="journal article" date="2024" name="Mol. Cell">
        <title>Cytoplasmic binding partners of the Integrator endonuclease INTS11 and its paralog CPSF73 are required for their nuclear function.</title>
        <authorList>
            <person name="Lin M.H."/>
            <person name="Jensen M.K."/>
            <person name="Elrod N.D."/>
            <person name="Chu H.F."/>
            <person name="Haseley M."/>
            <person name="Beam A.C."/>
            <person name="Huang K.L."/>
            <person name="Chiang W."/>
            <person name="Russell W.K."/>
            <person name="Williams K."/>
            <person name="Proschel C."/>
            <person name="Wagner E.J."/>
            <person name="Tong L."/>
        </authorList>
    </citation>
    <scope>IDENTIFICATION IN THE INTEGRATOR COMPLEX</scope>
    <scope>SUBCELLULAR LOCATION</scope>
</reference>
<reference evidence="13" key="10">
    <citation type="journal article" date="2020" name="Nat. Commun.">
        <title>INTS10-INTS13-INTS14 form a functional module of Integrator that binds nucleic acids and the cleavage module.</title>
        <authorList>
            <person name="Sabath K."/>
            <person name="Staeubli M.L."/>
            <person name="Marti S."/>
            <person name="Leitner A."/>
            <person name="Moes M."/>
            <person name="Jonas S."/>
        </authorList>
    </citation>
    <scope>X-RAY CRYSTALLOGRAPHY (2.54 ANGSTROMS) IN COMPLEX WITH INTS13</scope>
    <scope>FUNCTION</scope>
    <scope>IDENTIFICATION IN THE INTEGRATOR COMPLEX</scope>
</reference>
<reference evidence="14" key="11">
    <citation type="journal article" date="2024" name="Mol. Cell">
        <title>Basis of gene-specific transcription regulation by the Integrator complex.</title>
        <authorList>
            <person name="Sabath K."/>
            <person name="Nabih A."/>
            <person name="Arnold C."/>
            <person name="Moussa R."/>
            <person name="Domjan D."/>
            <person name="Zaugg J.B."/>
            <person name="Jonas S."/>
        </authorList>
    </citation>
    <scope>X-RAY CRYSTALLOGRAPHY (2.50 ANGSTROMS) IN COMPLEX WITH MAGNESIUM; INTS13 AND ZNF609</scope>
    <scope>FUNCTION</scope>
    <scope>IDENTIFICATION IN THE INTEGRATOR COMPLEX</scope>
</reference>
<reference evidence="18 19 20 21" key="12">
    <citation type="journal article" date="2024" name="Mol. Cell">
        <title>Structural basis of the Integrator complex assembly and association with transcription factors.</title>
        <authorList>
            <person name="Razew M."/>
            <person name="Fraudeau A."/>
            <person name="Pfleiderer M.M."/>
            <person name="Linares R."/>
            <person name="Galej W.P."/>
        </authorList>
    </citation>
    <scope>STRUCTURE BY ELECTRON MICROSCOPY (3.30 ANGSTROMS) IN COMPLEX WITH MAGNESIUM; INTS10; INTS13 AND INTS15</scope>
    <scope>FUNCTION</scope>
    <scope>IDENTIFICATION IN THE INTEGRATOR COMPLEX</scope>
</reference>
<reference evidence="15 16 17" key="13">
    <citation type="journal article" date="2024" name="Nature">
        <title>Structural basis of Integrator-dependent RNA polymerase II termination.</title>
        <authorList>
            <person name="Fianu I."/>
            <person name="Ochmann M."/>
            <person name="Walshe J.L."/>
            <person name="Dybkov O."/>
            <person name="Cruz J.N."/>
            <person name="Urlaub H."/>
            <person name="Cramer P."/>
        </authorList>
    </citation>
    <scope>STRUCTURE BY ELECTRON MICROSCOPY (3.10 ANGSTROMS) OF INTAC COMPLEX</scope>
    <scope>FUNCTION</scope>
    <scope>IDENTIFICATION IN THE INTAC COMPLEX</scope>
</reference>
<feature type="chain" id="PRO_0000296266" description="Integrator complex subunit 14">
    <location>
        <begin position="1"/>
        <end position="518"/>
    </location>
</feature>
<feature type="domain" description="VWFA">
    <location>
        <begin position="2"/>
        <end position="204"/>
    </location>
</feature>
<feature type="binding site" evidence="5 6 14 18">
    <location>
        <position position="10"/>
    </location>
    <ligand>
        <name>Mg(2+)</name>
        <dbReference type="ChEBI" id="CHEBI:18420"/>
    </ligand>
</feature>
<feature type="binding site" evidence="5 6 14 18">
    <location>
        <position position="12"/>
    </location>
    <ligand>
        <name>Mg(2+)</name>
        <dbReference type="ChEBI" id="CHEBI:18420"/>
    </ligand>
</feature>
<feature type="binding site" evidence="5 18">
    <location>
        <position position="86"/>
    </location>
    <ligand>
        <name>Mg(2+)</name>
        <dbReference type="ChEBI" id="CHEBI:18420"/>
    </ligand>
</feature>
<feature type="modified residue" description="N6-acetyllysine" evidence="22">
    <location>
        <position position="418"/>
    </location>
</feature>
<feature type="splice variant" id="VSP_044250" description="In isoform 4." evidence="8">
    <location>
        <begin position="1"/>
        <end position="79"/>
    </location>
</feature>
<feature type="splice variant" id="VSP_043277" description="In isoform 3." evidence="8">
    <original>VVVMDVSLSMTRPVSIEGSEEYQRKHLAAHGLTMLFEHMATNYKLEFTALVVFSSLWELMVPFTRDYNTLQ</original>
    <variation>ESLCRRTVSGDGHG</variation>
    <location>
        <begin position="4"/>
        <end position="74"/>
    </location>
</feature>
<feature type="splice variant" id="VSP_027180" description="In isoform 2." evidence="9">
    <original>EALSNMDDYDKT</original>
    <variation>VQNVVSYCMYRA</variation>
    <location>
        <begin position="75"/>
        <end position="86"/>
    </location>
</feature>
<feature type="splice variant" id="VSP_027181" description="In isoform 2." evidence="9">
    <location>
        <begin position="87"/>
        <end position="518"/>
    </location>
</feature>
<feature type="mutagenesis site" description="Abolished interaction with INTS10." evidence="3">
    <original>DVSLS</original>
    <variation>AVALA</variation>
    <location>
        <begin position="8"/>
        <end position="12"/>
    </location>
</feature>
<feature type="mutagenesis site" description="Abolished interaction with INTS10." evidence="3">
    <original>LSMTR</original>
    <variation>ESMTA</variation>
    <location>
        <begin position="11"/>
        <end position="15"/>
    </location>
</feature>
<feature type="sequence conflict" description="In Ref. 4; AAH37823." evidence="11" ref="4">
    <original>M</original>
    <variation>I</variation>
    <location>
        <position position="7"/>
    </location>
</feature>
<feature type="sequence conflict" description="In Ref. 1; CAB66597." evidence="11" ref="1">
    <original>E</original>
    <variation>G</variation>
    <location>
        <position position="89"/>
    </location>
</feature>
<feature type="sequence conflict" description="In Ref. 2; BAB55140." evidence="11" ref="2">
    <original>D</original>
    <variation>Y</variation>
    <location>
        <position position="177"/>
    </location>
</feature>
<feature type="sequence conflict" description="In Ref. 1; CAB66597." evidence="11" ref="1">
    <original>D</original>
    <variation>G</variation>
    <location>
        <position position="206"/>
    </location>
</feature>
<feature type="strand" evidence="24">
    <location>
        <begin position="3"/>
        <end position="8"/>
    </location>
</feature>
<feature type="helix" evidence="24">
    <location>
        <begin position="11"/>
        <end position="14"/>
    </location>
</feature>
<feature type="strand" evidence="24">
    <location>
        <begin position="15"/>
        <end position="17"/>
    </location>
</feature>
<feature type="strand" evidence="25">
    <location>
        <begin position="18"/>
        <end position="20"/>
    </location>
</feature>
<feature type="strand" evidence="25">
    <location>
        <begin position="22"/>
        <end position="25"/>
    </location>
</feature>
<feature type="helix" evidence="24">
    <location>
        <begin position="27"/>
        <end position="45"/>
    </location>
</feature>
<feature type="strand" evidence="24">
    <location>
        <begin position="51"/>
        <end position="68"/>
    </location>
</feature>
<feature type="helix" evidence="24">
    <location>
        <begin position="70"/>
        <end position="78"/>
    </location>
</feature>
<feature type="helix" evidence="24">
    <location>
        <begin position="91"/>
        <end position="103"/>
    </location>
</feature>
<feature type="strand" evidence="23">
    <location>
        <begin position="105"/>
        <end position="107"/>
    </location>
</feature>
<feature type="strand" evidence="24">
    <location>
        <begin position="109"/>
        <end position="115"/>
    </location>
</feature>
<feature type="strand" evidence="23">
    <location>
        <begin position="121"/>
        <end position="124"/>
    </location>
</feature>
<feature type="helix" evidence="23">
    <location>
        <begin position="126"/>
        <end position="131"/>
    </location>
</feature>
<feature type="turn" evidence="25">
    <location>
        <begin position="132"/>
        <end position="134"/>
    </location>
</feature>
<feature type="turn" evidence="23">
    <location>
        <begin position="135"/>
        <end position="140"/>
    </location>
</feature>
<feature type="strand" evidence="24">
    <location>
        <begin position="147"/>
        <end position="159"/>
    </location>
</feature>
<feature type="helix" evidence="24">
    <location>
        <begin position="160"/>
        <end position="164"/>
    </location>
</feature>
<feature type="helix" evidence="24">
    <location>
        <begin position="168"/>
        <end position="178"/>
    </location>
</feature>
<feature type="turn" evidence="24">
    <location>
        <begin position="179"/>
        <end position="181"/>
    </location>
</feature>
<feature type="strand" evidence="24">
    <location>
        <begin position="183"/>
        <end position="190"/>
    </location>
</feature>
<feature type="helix" evidence="24">
    <location>
        <begin position="194"/>
        <end position="208"/>
    </location>
</feature>
<feature type="strand" evidence="24">
    <location>
        <begin position="213"/>
        <end position="218"/>
    </location>
</feature>
<feature type="strand" evidence="24">
    <location>
        <begin position="221"/>
        <end position="229"/>
    </location>
</feature>
<feature type="turn" evidence="24">
    <location>
        <begin position="238"/>
        <end position="240"/>
    </location>
</feature>
<feature type="strand" evidence="25">
    <location>
        <begin position="242"/>
        <end position="244"/>
    </location>
</feature>
<feature type="strand" evidence="24">
    <location>
        <begin position="249"/>
        <end position="258"/>
    </location>
</feature>
<feature type="helix" evidence="24">
    <location>
        <begin position="259"/>
        <end position="262"/>
    </location>
</feature>
<feature type="strand" evidence="24">
    <location>
        <begin position="268"/>
        <end position="275"/>
    </location>
</feature>
<feature type="helix" evidence="24">
    <location>
        <begin position="299"/>
        <end position="304"/>
    </location>
</feature>
<feature type="helix" evidence="24">
    <location>
        <begin position="309"/>
        <end position="320"/>
    </location>
</feature>
<feature type="strand" evidence="24">
    <location>
        <begin position="322"/>
        <end position="329"/>
    </location>
</feature>
<feature type="strand" evidence="24">
    <location>
        <begin position="332"/>
        <end position="338"/>
    </location>
</feature>
<feature type="strand" evidence="25">
    <location>
        <begin position="342"/>
        <end position="344"/>
    </location>
</feature>
<feature type="strand" evidence="24">
    <location>
        <begin position="348"/>
        <end position="352"/>
    </location>
</feature>
<feature type="strand" evidence="24">
    <location>
        <begin position="355"/>
        <end position="357"/>
    </location>
</feature>
<feature type="helix" evidence="24">
    <location>
        <begin position="361"/>
        <end position="363"/>
    </location>
</feature>
<feature type="helix" evidence="24">
    <location>
        <begin position="366"/>
        <end position="368"/>
    </location>
</feature>
<feature type="strand" evidence="24">
    <location>
        <begin position="369"/>
        <end position="371"/>
    </location>
</feature>
<feature type="helix" evidence="24">
    <location>
        <begin position="372"/>
        <end position="374"/>
    </location>
</feature>
<feature type="strand" evidence="24">
    <location>
        <begin position="375"/>
        <end position="377"/>
    </location>
</feature>
<feature type="turn" evidence="24">
    <location>
        <begin position="379"/>
        <end position="384"/>
    </location>
</feature>
<feature type="strand" evidence="25">
    <location>
        <begin position="388"/>
        <end position="390"/>
    </location>
</feature>
<feature type="helix" evidence="24">
    <location>
        <begin position="398"/>
        <end position="400"/>
    </location>
</feature>
<feature type="helix" evidence="24">
    <location>
        <begin position="409"/>
        <end position="424"/>
    </location>
</feature>
<feature type="turn" evidence="24">
    <location>
        <begin position="425"/>
        <end position="429"/>
    </location>
</feature>
<feature type="helix" evidence="24">
    <location>
        <begin position="430"/>
        <end position="447"/>
    </location>
</feature>
<feature type="helix" evidence="24">
    <location>
        <begin position="450"/>
        <end position="466"/>
    </location>
</feature>
<feature type="helix" evidence="24">
    <location>
        <begin position="474"/>
        <end position="490"/>
    </location>
</feature>
<feature type="strand" evidence="24">
    <location>
        <begin position="493"/>
        <end position="495"/>
    </location>
</feature>
<feature type="strand" evidence="24">
    <location>
        <begin position="498"/>
        <end position="500"/>
    </location>
</feature>
<name>INT14_HUMAN</name>
<accession>Q96SY0</accession>
<accession>B4DDI6</accession>
<accession>B4DVD5</accession>
<accession>Q49AH8</accession>
<accession>Q96HX5</accession>
<accession>Q9H0S5</accession>
<protein>
    <recommendedName>
        <fullName evidence="11">Integrator complex subunit 14</fullName>
    </recommendedName>
    <alternativeName>
        <fullName>von Willebrand factor A domain-containing protein 9</fullName>
    </alternativeName>
</protein>
<comment type="function">
    <text evidence="2 4 5 6">Component of the integrator complex, a multiprotein complex that terminates RNA polymerase II (Pol II) transcription in the promoter-proximal region of genes (PubMed:38570683, PubMed:38823386). The integrator complex provides a quality checkpoint during transcription elongation by driving premature transcription termination of transcripts that are unfavorably configured for transcriptional elongation: the complex terminates transcription by (1) catalyzing dephosphorylation of the C-terminal domain (CTD) of Pol II subunit POLR2A/RPB1 and SUPT5H/SPT5, (2) degrading the exiting nascent RNA transcript via endonuclease activity and (3) promoting the release of Pol II from bound DNA (PubMed:38570683). The integrator complex is also involved in terminating the synthesis of non-coding Pol II transcripts, such as enhancer RNAs (eRNAs), small nuclear RNAs (snRNAs), telomerase RNAs and long non-coding RNAs (lncRNAs) (PubMed:32647223). Within the integrator complex, INTS14 is part of the integrator tail module that acts as a platform for the recruitment of transcription factors at promoters (PubMed:38823386, PubMed:38906142).</text>
</comment>
<comment type="subunit">
    <text evidence="2 3 4 5 6 7">Component of the Integrator complex, composed of core subunits INTS1, INTS2, INTS3, INTS4, INTS5, INTS6, INTS7, INTS8, INTS9/RC74, INTS10, INTS11/CPSF3L, INTS12, INTS13, INTS14 and INTS15 (PubMed:32647223, PubMed:36920904, PubMed:38570683, PubMed:38906142, PubMed:39032490). The core complex associates with protein phosphatase 2A subunits PPP2CA and PPP2R1A, to form the Integrator-PP2A (INTAC) complex (PubMed:38570683). INTS14 is part of the tail subcomplex, composed of INTS10, INTS13, INTS14 and INTS15 (PubMed:32647223, PubMed:38823386, PubMed:38906142).</text>
</comment>
<comment type="interaction">
    <interactant intactId="EBI-4409724">
        <id>Q96SY0</id>
    </interactant>
    <interactant intactId="EBI-536703">
        <id>Q9NVR2</id>
        <label>INTS10</label>
    </interactant>
    <organismsDiffer>false</organismsDiffer>
    <experiments>13</experiments>
</comment>
<comment type="interaction">
    <interactant intactId="EBI-4409724">
        <id>Q96SY0</id>
    </interactant>
    <interactant intactId="EBI-741429">
        <id>Q9NVM9</id>
        <label>INTS13</label>
    </interactant>
    <organismsDiffer>false</organismsDiffer>
    <experiments>16</experiments>
</comment>
<comment type="subcellular location">
    <subcellularLocation>
        <location evidence="7">Nucleus</location>
    </subcellularLocation>
</comment>
<comment type="alternative products">
    <event type="alternative splicing"/>
    <isoform>
        <id>Q96SY0-1</id>
        <name>1</name>
        <sequence type="displayed"/>
    </isoform>
    <isoform>
        <id>Q96SY0-2</id>
        <name>2</name>
        <sequence type="described" ref="VSP_027180 VSP_027181"/>
    </isoform>
    <isoform>
        <id>Q96SY0-4</id>
        <name>4</name>
        <sequence type="described" ref="VSP_044250"/>
    </isoform>
    <isoform>
        <id>Q96SY0-3</id>
        <name>3</name>
        <sequence type="described" ref="VSP_043277"/>
    </isoform>
</comment>
<comment type="tissue specificity">
    <text evidence="1">Strongly expressed in numerous cancer cells compared with their non-cancerous counterparts (lung, prostate, colon, stomach and skin).</text>
</comment>
<comment type="similarity">
    <text evidence="11">Belongs to the Integrator subunit 14 family.</text>
</comment>